<proteinExistence type="inferred from homology"/>
<comment type="function">
    <text evidence="1">Plays a role in the transport of magnesium and cobalt ions.</text>
</comment>
<comment type="similarity">
    <text evidence="3">Belongs to the UPF0053 family.</text>
</comment>
<sequence length="292" mass="33298">MSDDNSHSSDTISNKKGFFSLLLSQLFHGEPKNRDELLALIRDSGQNDLIDEDTRDMLEGVMDIADQRVRDIMIPRSQMITLKRNQTLDECLDVIIESAHSRFPVISEDKDHIEGILMAKDLLPFMRSDAEAFSMDKVLRQAVVVPESKRVDRMLKEFRSQRYHMAIVIDEFGGVSGLVTIEDILELIVGEIEDEYDEEDDIDFRQLSRHTWTVRALASIEDFNEAFGTHFSDEEVDTIGGLVMQAFGHLPARGETIDIDGYQFKVAMADSRRIIQVHVKIPDDSPQPKLDE</sequence>
<accession>P0AE81</accession>
<accession>P77392</accession>
<reference key="1">
    <citation type="journal article" date="2002" name="Nucleic Acids Res.">
        <title>Genome sequence of Shigella flexneri 2a: insights into pathogenicity through comparison with genomes of Escherichia coli K12 and O157.</title>
        <authorList>
            <person name="Jin Q."/>
            <person name="Yuan Z."/>
            <person name="Xu J."/>
            <person name="Wang Y."/>
            <person name="Shen Y."/>
            <person name="Lu W."/>
            <person name="Wang J."/>
            <person name="Liu H."/>
            <person name="Yang J."/>
            <person name="Yang F."/>
            <person name="Zhang X."/>
            <person name="Zhang J."/>
            <person name="Yang G."/>
            <person name="Wu H."/>
            <person name="Qu D."/>
            <person name="Dong J."/>
            <person name="Sun L."/>
            <person name="Xue Y."/>
            <person name="Zhao A."/>
            <person name="Gao Y."/>
            <person name="Zhu J."/>
            <person name="Kan B."/>
            <person name="Ding K."/>
            <person name="Chen S."/>
            <person name="Cheng H."/>
            <person name="Yao Z."/>
            <person name="He B."/>
            <person name="Chen R."/>
            <person name="Ma D."/>
            <person name="Qiang B."/>
            <person name="Wen Y."/>
            <person name="Hou Y."/>
            <person name="Yu J."/>
        </authorList>
    </citation>
    <scope>NUCLEOTIDE SEQUENCE [LARGE SCALE GENOMIC DNA]</scope>
    <source>
        <strain>301 / Serotype 2a</strain>
    </source>
</reference>
<reference key="2">
    <citation type="journal article" date="2003" name="Infect. Immun.">
        <title>Complete genome sequence and comparative genomics of Shigella flexneri serotype 2a strain 2457T.</title>
        <authorList>
            <person name="Wei J."/>
            <person name="Goldberg M.B."/>
            <person name="Burland V."/>
            <person name="Venkatesan M.M."/>
            <person name="Deng W."/>
            <person name="Fournier G."/>
            <person name="Mayhew G.F."/>
            <person name="Plunkett G. III"/>
            <person name="Rose D.J."/>
            <person name="Darling A."/>
            <person name="Mau B."/>
            <person name="Perna N.T."/>
            <person name="Payne S.M."/>
            <person name="Runyen-Janecky L.J."/>
            <person name="Zhou S."/>
            <person name="Schwartz D.C."/>
            <person name="Blattner F.R."/>
        </authorList>
    </citation>
    <scope>NUCLEOTIDE SEQUENCE [LARGE SCALE GENOMIC DNA]</scope>
    <source>
        <strain>ATCC 700930 / 2457T / Serotype 2a</strain>
    </source>
</reference>
<name>CORC_SHIFL</name>
<dbReference type="EMBL" id="AE005674">
    <property type="protein sequence ID" value="AAN42261.1"/>
    <property type="molecule type" value="Genomic_DNA"/>
</dbReference>
<dbReference type="EMBL" id="AE014073">
    <property type="protein sequence ID" value="AAP16132.1"/>
    <property type="molecule type" value="Genomic_DNA"/>
</dbReference>
<dbReference type="RefSeq" id="WP_001278605.1">
    <property type="nucleotide sequence ID" value="NZ_WPGW01000002.1"/>
</dbReference>
<dbReference type="SMR" id="P0AE81"/>
<dbReference type="STRING" id="198214.SF0624"/>
<dbReference type="PaxDb" id="198214-SF0624"/>
<dbReference type="GeneID" id="93776824"/>
<dbReference type="KEGG" id="sfl:SF0624"/>
<dbReference type="KEGG" id="sfx:S0646"/>
<dbReference type="PATRIC" id="fig|198214.7.peg.729"/>
<dbReference type="HOGENOM" id="CLU_015237_3_0_6"/>
<dbReference type="Proteomes" id="UP000001006">
    <property type="component" value="Chromosome"/>
</dbReference>
<dbReference type="Proteomes" id="UP000002673">
    <property type="component" value="Chromosome"/>
</dbReference>
<dbReference type="GO" id="GO:0005886">
    <property type="term" value="C:plasma membrane"/>
    <property type="evidence" value="ECO:0007669"/>
    <property type="project" value="TreeGrafter"/>
</dbReference>
<dbReference type="GO" id="GO:0050660">
    <property type="term" value="F:flavin adenine dinucleotide binding"/>
    <property type="evidence" value="ECO:0007669"/>
    <property type="project" value="InterPro"/>
</dbReference>
<dbReference type="CDD" id="cd04590">
    <property type="entry name" value="CBS_pair_CorC_HlyC_assoc"/>
    <property type="match status" value="1"/>
</dbReference>
<dbReference type="FunFam" id="3.30.465.10:FF:000003">
    <property type="entry name" value="Magnesium and cobalt efflux protein corC"/>
    <property type="match status" value="1"/>
</dbReference>
<dbReference type="FunFam" id="3.10.580.10:FF:000002">
    <property type="entry name" value="Magnesium/cobalt efflux protein CorC"/>
    <property type="match status" value="1"/>
</dbReference>
<dbReference type="Gene3D" id="3.30.465.10">
    <property type="match status" value="1"/>
</dbReference>
<dbReference type="Gene3D" id="3.10.580.10">
    <property type="entry name" value="CBS-domain"/>
    <property type="match status" value="1"/>
</dbReference>
<dbReference type="InterPro" id="IPR000644">
    <property type="entry name" value="CBS_dom"/>
</dbReference>
<dbReference type="InterPro" id="IPR046342">
    <property type="entry name" value="CBS_dom_sf"/>
</dbReference>
<dbReference type="InterPro" id="IPR054115">
    <property type="entry name" value="CorC_N"/>
</dbReference>
<dbReference type="InterPro" id="IPR036318">
    <property type="entry name" value="FAD-bd_PCMH-like_sf"/>
</dbReference>
<dbReference type="InterPro" id="IPR016169">
    <property type="entry name" value="FAD-bd_PCMH_sub2"/>
</dbReference>
<dbReference type="InterPro" id="IPR044751">
    <property type="entry name" value="Ion_transp-like_CBS"/>
</dbReference>
<dbReference type="InterPro" id="IPR005170">
    <property type="entry name" value="Transptr-assoc_dom"/>
</dbReference>
<dbReference type="NCBIfam" id="NF011675">
    <property type="entry name" value="PRK15094.1"/>
    <property type="match status" value="1"/>
</dbReference>
<dbReference type="PANTHER" id="PTHR22777">
    <property type="entry name" value="HEMOLYSIN-RELATED"/>
    <property type="match status" value="1"/>
</dbReference>
<dbReference type="PANTHER" id="PTHR22777:SF27">
    <property type="entry name" value="MAGNESIUM AND COBALT EFFLUX PROTEIN CORC"/>
    <property type="match status" value="1"/>
</dbReference>
<dbReference type="Pfam" id="PF00571">
    <property type="entry name" value="CBS"/>
    <property type="match status" value="2"/>
</dbReference>
<dbReference type="Pfam" id="PF03471">
    <property type="entry name" value="CorC_HlyC"/>
    <property type="match status" value="1"/>
</dbReference>
<dbReference type="Pfam" id="PF21917">
    <property type="entry name" value="NMB0537_N"/>
    <property type="match status" value="1"/>
</dbReference>
<dbReference type="SMART" id="SM00116">
    <property type="entry name" value="CBS"/>
    <property type="match status" value="2"/>
</dbReference>
<dbReference type="SMART" id="SM01091">
    <property type="entry name" value="CorC_HlyC"/>
    <property type="match status" value="1"/>
</dbReference>
<dbReference type="SUPFAM" id="SSF54631">
    <property type="entry name" value="CBS-domain pair"/>
    <property type="match status" value="1"/>
</dbReference>
<dbReference type="SUPFAM" id="SSF56176">
    <property type="entry name" value="FAD-binding/transporter-associated domain-like"/>
    <property type="match status" value="1"/>
</dbReference>
<dbReference type="PROSITE" id="PS51371">
    <property type="entry name" value="CBS"/>
    <property type="match status" value="2"/>
</dbReference>
<gene>
    <name type="primary">corC</name>
    <name type="ordered locus">SF0624</name>
    <name type="ordered locus">S0646</name>
</gene>
<evidence type="ECO:0000250" key="1"/>
<evidence type="ECO:0000255" key="2">
    <source>
        <dbReference type="PROSITE-ProRule" id="PRU00703"/>
    </source>
</evidence>
<evidence type="ECO:0000305" key="3"/>
<keyword id="KW-0129">CBS domain</keyword>
<keyword id="KW-0170">Cobalt</keyword>
<keyword id="KW-0460">Magnesium</keyword>
<keyword id="KW-1185">Reference proteome</keyword>
<keyword id="KW-0677">Repeat</keyword>
<keyword id="KW-0813">Transport</keyword>
<organism>
    <name type="scientific">Shigella flexneri</name>
    <dbReference type="NCBI Taxonomy" id="623"/>
    <lineage>
        <taxon>Bacteria</taxon>
        <taxon>Pseudomonadati</taxon>
        <taxon>Pseudomonadota</taxon>
        <taxon>Gammaproteobacteria</taxon>
        <taxon>Enterobacterales</taxon>
        <taxon>Enterobacteriaceae</taxon>
        <taxon>Shigella</taxon>
    </lineage>
</organism>
<feature type="chain" id="PRO_0000088352" description="Magnesium and cobalt efflux protein CorC">
    <location>
        <begin position="1"/>
        <end position="292"/>
    </location>
</feature>
<feature type="domain" description="CBS 1" evidence="2">
    <location>
        <begin position="73"/>
        <end position="133"/>
    </location>
</feature>
<feature type="domain" description="CBS 2" evidence="2">
    <location>
        <begin position="135"/>
        <end position="195"/>
    </location>
</feature>
<protein>
    <recommendedName>
        <fullName>Magnesium and cobalt efflux protein CorC</fullName>
    </recommendedName>
</protein>